<name>HEMA_CVHN2</name>
<comment type="function">
    <text evidence="1">Structural protein that makes short spikes at the surface of the virus. Contains receptor binding and receptor-destroying activities. Mediates de-O-acetylation of N-acetyl-4-O-acetylneuraminic acid, which is probably the receptor determinant recognized by the virus on the surface of erythrocytes and susceptible cells. This receptor-destroying activity is important for virus release as it probably helps preventing self-aggregation and ensures the efficient spread of the progeny virus from cell to cell. May serve as a secondary viral attachment protein for initiating infection, the spike protein being the major one. May become a target for both the humoral and the cellular branches of the immune system.</text>
</comment>
<comment type="catalytic activity">
    <reaction evidence="1">
        <text>N-acetyl-9-O-acetylneuraminate + H2O = N-acetylneuraminate + acetate + H(+)</text>
        <dbReference type="Rhea" id="RHEA:22600"/>
        <dbReference type="ChEBI" id="CHEBI:15377"/>
        <dbReference type="ChEBI" id="CHEBI:15378"/>
        <dbReference type="ChEBI" id="CHEBI:28999"/>
        <dbReference type="ChEBI" id="CHEBI:30089"/>
        <dbReference type="ChEBI" id="CHEBI:35418"/>
        <dbReference type="EC" id="3.1.1.53"/>
    </reaction>
</comment>
<comment type="catalytic activity">
    <reaction evidence="1">
        <text>N-acetyl-4-O-acetylneuraminate + H2O = N-acetylneuraminate + acetate + H(+)</text>
        <dbReference type="Rhea" id="RHEA:25564"/>
        <dbReference type="ChEBI" id="CHEBI:15377"/>
        <dbReference type="ChEBI" id="CHEBI:15378"/>
        <dbReference type="ChEBI" id="CHEBI:29006"/>
        <dbReference type="ChEBI" id="CHEBI:30089"/>
        <dbReference type="ChEBI" id="CHEBI:35418"/>
        <dbReference type="EC" id="3.1.1.53"/>
    </reaction>
</comment>
<comment type="subunit">
    <text evidence="1">Homodimer; disulfide-linked. Forms a complex with the M protein in the pre-Golgi. Associates then with S-M complex to form a ternary complex S-M-HE.</text>
</comment>
<comment type="subcellular location">
    <subcellularLocation>
        <location evidence="1">Virion membrane</location>
        <topology evidence="1">Single-pass type I membrane protein</topology>
    </subcellularLocation>
    <subcellularLocation>
        <location evidence="1">Host cell membrane</location>
        <topology evidence="1">Single-pass type I membrane protein</topology>
    </subcellularLocation>
    <text evidence="1">In infected cells becomes incorporated into the envelope of virions during virus assembly at the endoplasmic reticulum and cis Golgi. However, some may escape incorporation into virions and subsequently migrate to the cell surface.</text>
</comment>
<comment type="PTM">
    <text evidence="1">N-glycosylated in the host RER.</text>
</comment>
<comment type="miscellaneous">
    <text>Isolate N2 belongs to genotype B.</text>
</comment>
<comment type="similarity">
    <text evidence="1">Belongs to the influenza type C/coronaviruses hemagglutinin-esterase family.</text>
</comment>
<sequence length="385" mass="44466">MLIIFLFFNFCYGFNEPLNVVSHLNHDWFLFGDSRSDCNHINNLKIKNYGYLDIHPSLCNNGKISSSAGDSIFKSYHFTRFYNYTGEGDQIIFYEGVNFNPHHRFKCFFNGSNDVWIFNKVRFYRALYSNMALFRYLTFVDILYNFSFSIKANICNSNILSLNNPIFISTNYSKDVYFTLSGCSLYLVPLCLFKSNFSQYYYNMDTGFAYGYSNFVSSDLDCTYISLKPGSYKIFSTGFVLSIPTKALCFNKSKQFVPVQVVDSRWNNLRASDTSLSDACQLPYCYFRNSSGNYVGKYDINHGDNGFTSILSGLLYNVSCISYYGSFLYDNFTSIWPRFSFGNCPTSAYIKLNCFYDPLPIILQGILLFLALLFIVFLLFLVYHG</sequence>
<dbReference type="EC" id="3.1.1.53" evidence="1"/>
<dbReference type="EMBL" id="AY884001">
    <property type="protein sequence ID" value="AAX76520.1"/>
    <property type="molecule type" value="Genomic_RNA"/>
</dbReference>
<dbReference type="SMR" id="Q14EB1"/>
<dbReference type="GlyCosmos" id="Q14EB1">
    <property type="glycosylation" value="8 sites, No reported glycans"/>
</dbReference>
<dbReference type="Proteomes" id="UP000006551">
    <property type="component" value="Genome"/>
</dbReference>
<dbReference type="GO" id="GO:0020002">
    <property type="term" value="C:host cell plasma membrane"/>
    <property type="evidence" value="ECO:0007669"/>
    <property type="project" value="UniProtKB-SubCell"/>
</dbReference>
<dbReference type="GO" id="GO:0016020">
    <property type="term" value="C:membrane"/>
    <property type="evidence" value="ECO:0007669"/>
    <property type="project" value="UniProtKB-UniRule"/>
</dbReference>
<dbReference type="GO" id="GO:0019031">
    <property type="term" value="C:viral envelope"/>
    <property type="evidence" value="ECO:0007669"/>
    <property type="project" value="UniProtKB-UniRule"/>
</dbReference>
<dbReference type="GO" id="GO:0055036">
    <property type="term" value="C:virion membrane"/>
    <property type="evidence" value="ECO:0007669"/>
    <property type="project" value="UniProtKB-SubCell"/>
</dbReference>
<dbReference type="GO" id="GO:0046789">
    <property type="term" value="F:host cell surface receptor binding"/>
    <property type="evidence" value="ECO:0007669"/>
    <property type="project" value="UniProtKB-UniRule"/>
</dbReference>
<dbReference type="GO" id="GO:0106331">
    <property type="term" value="F:sialate 4-O-acetylesterase activity"/>
    <property type="evidence" value="ECO:0007669"/>
    <property type="project" value="RHEA"/>
</dbReference>
<dbReference type="GO" id="GO:0106330">
    <property type="term" value="F:sialate 9-O-acetylesterase activity"/>
    <property type="evidence" value="ECO:0007669"/>
    <property type="project" value="RHEA"/>
</dbReference>
<dbReference type="GO" id="GO:0001681">
    <property type="term" value="F:sialate O-acetylesterase activity"/>
    <property type="evidence" value="ECO:0000250"/>
    <property type="project" value="UniProtKB"/>
</dbReference>
<dbReference type="GO" id="GO:0019064">
    <property type="term" value="P:fusion of virus membrane with host plasma membrane"/>
    <property type="evidence" value="ECO:0007669"/>
    <property type="project" value="UniProtKB-UniRule"/>
</dbReference>
<dbReference type="HAMAP" id="MF_04207">
    <property type="entry name" value="BETA_CORONA_HE"/>
    <property type="match status" value="1"/>
</dbReference>
<dbReference type="InterPro" id="IPR008980">
    <property type="entry name" value="Capsid_hemagglutn"/>
</dbReference>
<dbReference type="InterPro" id="IPR042545">
    <property type="entry name" value="HEMA"/>
</dbReference>
<dbReference type="InterPro" id="IPR007142">
    <property type="entry name" value="Hemagglutn-estrase_core"/>
</dbReference>
<dbReference type="InterPro" id="IPR003860">
    <property type="entry name" value="Hemagglutn-estrase_hemagglutn"/>
</dbReference>
<dbReference type="Pfam" id="PF03996">
    <property type="entry name" value="Hema_esterase"/>
    <property type="match status" value="1"/>
</dbReference>
<dbReference type="Pfam" id="PF02710">
    <property type="entry name" value="Hema_HEFG"/>
    <property type="match status" value="1"/>
</dbReference>
<dbReference type="SUPFAM" id="SSF52266">
    <property type="entry name" value="SGNH hydrolase"/>
    <property type="match status" value="1"/>
</dbReference>
<dbReference type="SUPFAM" id="SSF49818">
    <property type="entry name" value="Viral protein domain"/>
    <property type="match status" value="1"/>
</dbReference>
<organism>
    <name type="scientific">Human coronavirus HKU1 (isolate N2)</name>
    <name type="common">HCoV-HKU1</name>
    <dbReference type="NCBI Taxonomy" id="443240"/>
    <lineage>
        <taxon>Viruses</taxon>
        <taxon>Riboviria</taxon>
        <taxon>Orthornavirae</taxon>
        <taxon>Pisuviricota</taxon>
        <taxon>Pisoniviricetes</taxon>
        <taxon>Nidovirales</taxon>
        <taxon>Cornidovirineae</taxon>
        <taxon>Coronaviridae</taxon>
        <taxon>Orthocoronavirinae</taxon>
        <taxon>Betacoronavirus</taxon>
        <taxon>Embecovirus</taxon>
        <taxon>Human coronavirus HKU1</taxon>
    </lineage>
</organism>
<evidence type="ECO:0000255" key="1">
    <source>
        <dbReference type="HAMAP-Rule" id="MF_04207"/>
    </source>
</evidence>
<organismHost>
    <name type="scientific">Homo sapiens</name>
    <name type="common">Human</name>
    <dbReference type="NCBI Taxonomy" id="9606"/>
</organismHost>
<reference key="1">
    <citation type="journal article" date="2006" name="J. Virol.">
        <title>Comparative analysis of 22 coronavirus HKU1 genomes reveals a novel genotype and evidence of natural recombination in coronavirus HKU1.</title>
        <authorList>
            <person name="Woo P.C.Y."/>
            <person name="Lau S.K.P."/>
            <person name="Yip C.C.Y."/>
            <person name="Huang Y."/>
            <person name="Tsoi H.-W."/>
            <person name="Chan K.-H."/>
            <person name="Yuen K.-Y."/>
        </authorList>
    </citation>
    <scope>NUCLEOTIDE SEQUENCE [GENOMIC RNA]</scope>
</reference>
<accession>Q14EB1</accession>
<proteinExistence type="inferred from homology"/>
<feature type="signal peptide" evidence="1">
    <location>
        <begin position="1"/>
        <end position="11"/>
    </location>
</feature>
<feature type="chain" id="PRO_0000297762" description="Hemagglutinin-esterase" evidence="1">
    <location>
        <begin position="12"/>
        <end position="385"/>
    </location>
</feature>
<feature type="topological domain" description="Virion surface" evidence="1">
    <location>
        <begin position="12"/>
        <end position="361"/>
    </location>
</feature>
<feature type="transmembrane region" description="Helical" evidence="1">
    <location>
        <begin position="362"/>
        <end position="382"/>
    </location>
</feature>
<feature type="topological domain" description="Intravirion" evidence="1">
    <location>
        <begin position="383"/>
        <end position="385"/>
    </location>
</feature>
<feature type="region of interest" description="Esterase domain 1" evidence="1">
    <location>
        <begin position="1"/>
        <end position="121"/>
    </location>
</feature>
<feature type="region of interest" description="Receptor binding" evidence="1">
    <location>
        <begin position="122"/>
        <end position="239"/>
    </location>
</feature>
<feature type="region of interest" description="Esterase domain 2" evidence="1">
    <location>
        <begin position="240"/>
        <end position="352"/>
    </location>
</feature>
<feature type="active site" description="Nucleophile" evidence="1">
    <location>
        <position position="34"/>
    </location>
</feature>
<feature type="active site" description="Charge relay system" evidence="1">
    <location>
        <position position="299"/>
    </location>
</feature>
<feature type="active site" description="Charge relay system" evidence="1">
    <location>
        <position position="302"/>
    </location>
</feature>
<feature type="glycosylation site" description="N-linked (GlcNAc...) asparagine; by host" evidence="1">
    <location>
        <position position="83"/>
    </location>
</feature>
<feature type="glycosylation site" description="N-linked (GlcNAc...) asparagine; by host" evidence="1">
    <location>
        <position position="110"/>
    </location>
</feature>
<feature type="glycosylation site" description="N-linked (GlcNAc...) asparagine; by host" evidence="1">
    <location>
        <position position="145"/>
    </location>
</feature>
<feature type="glycosylation site" description="N-linked (GlcNAc...) asparagine; by host" evidence="1">
    <location>
        <position position="171"/>
    </location>
</feature>
<feature type="glycosylation site" description="N-linked (GlcNAc...) asparagine; by host" evidence="1">
    <location>
        <position position="196"/>
    </location>
</feature>
<feature type="glycosylation site" description="N-linked (GlcNAc...) asparagine; by host" evidence="1">
    <location>
        <position position="251"/>
    </location>
</feature>
<feature type="glycosylation site" description="N-linked (GlcNAc...) asparagine; by host" evidence="1">
    <location>
        <position position="289"/>
    </location>
</feature>
<feature type="glycosylation site" description="N-linked (GlcNAc...) asparagine; by host" evidence="1">
    <location>
        <position position="331"/>
    </location>
</feature>
<feature type="disulfide bond" evidence="1">
    <location>
        <begin position="38"/>
        <end position="59"/>
    </location>
</feature>
<feature type="disulfide bond" evidence="1">
    <location>
        <begin position="107"/>
        <end position="155"/>
    </location>
</feature>
<feature type="disulfide bond" evidence="1">
    <location>
        <begin position="183"/>
        <end position="249"/>
    </location>
</feature>
<feature type="disulfide bond" evidence="1">
    <location>
        <begin position="191"/>
        <end position="222"/>
    </location>
</feature>
<feature type="disulfide bond" evidence="1">
    <location>
        <begin position="280"/>
        <end position="285"/>
    </location>
</feature>
<feature type="disulfide bond" evidence="1">
    <location>
        <begin position="320"/>
        <end position="344"/>
    </location>
</feature>
<gene>
    <name evidence="1" type="primary">HE</name>
    <name type="ORF">2</name>
</gene>
<protein>
    <recommendedName>
        <fullName evidence="1">Hemagglutinin-esterase</fullName>
        <shortName evidence="1">HE protein</shortName>
        <ecNumber evidence="1">3.1.1.53</ecNumber>
    </recommendedName>
    <alternativeName>
        <fullName evidence="1">E3 glycoprotein</fullName>
    </alternativeName>
</protein>
<keyword id="KW-1015">Disulfide bond</keyword>
<keyword id="KW-0325">Glycoprotein</keyword>
<keyword id="KW-0348">Hemagglutinin</keyword>
<keyword id="KW-1032">Host cell membrane</keyword>
<keyword id="KW-1043">Host membrane</keyword>
<keyword id="KW-0378">Hydrolase</keyword>
<keyword id="KW-0472">Membrane</keyword>
<keyword id="KW-0732">Signal</keyword>
<keyword id="KW-0812">Transmembrane</keyword>
<keyword id="KW-1133">Transmembrane helix</keyword>
<keyword id="KW-0261">Viral envelope protein</keyword>
<keyword id="KW-0946">Virion</keyword>